<keyword id="KW-0002">3D-structure</keyword>
<keyword id="KW-0165">Cleavage on pair of basic residues</keyword>
<keyword id="KW-0903">Direct protein sequencing</keyword>
<keyword id="KW-1015">Disulfide bond</keyword>
<keyword id="KW-0967">Endosome</keyword>
<keyword id="KW-0325">Glycoprotein</keyword>
<keyword id="KW-0339">Growth factor</keyword>
<keyword id="KW-0446">Lipid-binding</keyword>
<keyword id="KW-0481">Metalloenzyme inhibitor</keyword>
<keyword id="KW-0483">Metalloprotease inhibitor</keyword>
<keyword id="KW-0646">Protease inhibitor</keyword>
<keyword id="KW-1185">Reference proteome</keyword>
<keyword id="KW-0964">Secreted</keyword>
<keyword id="KW-0732">Signal</keyword>
<proteinExistence type="evidence at protein level"/>
<gene>
    <name type="primary">Ngf</name>
    <name type="synonym">Ngfb</name>
</gene>
<evidence type="ECO:0000250" key="1">
    <source>
        <dbReference type="UniProtKB" id="P01138"/>
    </source>
</evidence>
<evidence type="ECO:0000255" key="2"/>
<evidence type="ECO:0000269" key="3">
    <source>
    </source>
</evidence>
<evidence type="ECO:0000269" key="4">
    <source>
    </source>
</evidence>
<evidence type="ECO:0000269" key="5">
    <source>
    </source>
</evidence>
<evidence type="ECO:0000269" key="6">
    <source>
    </source>
</evidence>
<evidence type="ECO:0000269" key="7">
    <source>
    </source>
</evidence>
<evidence type="ECO:0000269" key="8">
    <source>
    </source>
</evidence>
<evidence type="ECO:0000269" key="9">
    <source>
    </source>
</evidence>
<evidence type="ECO:0000269" key="10">
    <source>
    </source>
</evidence>
<evidence type="ECO:0000269" key="11">
    <source>
    </source>
</evidence>
<evidence type="ECO:0000269" key="12">
    <source>
    </source>
</evidence>
<evidence type="ECO:0000269" key="13">
    <source>
    </source>
</evidence>
<evidence type="ECO:0000305" key="14"/>
<evidence type="ECO:0000305" key="15">
    <source>
    </source>
</evidence>
<evidence type="ECO:0000305" key="16">
    <source>
    </source>
</evidence>
<evidence type="ECO:0007744" key="17">
    <source>
        <dbReference type="PDB" id="1BET"/>
    </source>
</evidence>
<evidence type="ECO:0007744" key="18">
    <source>
        <dbReference type="PDB" id="1BTG"/>
    </source>
</evidence>
<evidence type="ECO:0007744" key="19">
    <source>
        <dbReference type="PDB" id="1SGF"/>
    </source>
</evidence>
<evidence type="ECO:0007744" key="20">
    <source>
        <dbReference type="PDB" id="3IJ2"/>
    </source>
</evidence>
<evidence type="ECO:0007744" key="21">
    <source>
        <dbReference type="PDB" id="4EAX"/>
    </source>
</evidence>
<evidence type="ECO:0007744" key="22">
    <source>
        <dbReference type="PDB" id="4XPJ"/>
    </source>
</evidence>
<evidence type="ECO:0007744" key="23">
    <source>
        <dbReference type="PDB" id="5LSD"/>
    </source>
</evidence>
<evidence type="ECO:0007744" key="24">
    <source>
        <dbReference type="PDB" id="6FFY"/>
    </source>
</evidence>
<evidence type="ECO:0007829" key="25">
    <source>
        <dbReference type="PDB" id="1BET"/>
    </source>
</evidence>
<evidence type="ECO:0007829" key="26">
    <source>
        <dbReference type="PDB" id="4EAX"/>
    </source>
</evidence>
<evidence type="ECO:0007829" key="27">
    <source>
        <dbReference type="PDB" id="5LSD"/>
    </source>
</evidence>
<organism>
    <name type="scientific">Mus musculus</name>
    <name type="common">Mouse</name>
    <dbReference type="NCBI Taxonomy" id="10090"/>
    <lineage>
        <taxon>Eukaryota</taxon>
        <taxon>Metazoa</taxon>
        <taxon>Chordata</taxon>
        <taxon>Craniata</taxon>
        <taxon>Vertebrata</taxon>
        <taxon>Euteleostomi</taxon>
        <taxon>Mammalia</taxon>
        <taxon>Eutheria</taxon>
        <taxon>Euarchontoglires</taxon>
        <taxon>Glires</taxon>
        <taxon>Rodentia</taxon>
        <taxon>Myomorpha</taxon>
        <taxon>Muroidea</taxon>
        <taxon>Muridae</taxon>
        <taxon>Murinae</taxon>
        <taxon>Mus</taxon>
        <taxon>Mus</taxon>
    </lineage>
</organism>
<protein>
    <recommendedName>
        <fullName>Beta-nerve growth factor</fullName>
        <shortName>Beta-NGF</shortName>
    </recommendedName>
</protein>
<name>NGF_MOUSE</name>
<comment type="function">
    <text evidence="1 5 6 7 10">Nerve growth factor is important for the development and maintenance of the sympathetic and sensory nervous systems (PubMed:20036257). Extracellular ligand for the NTRK1 and NGFR receptors, activates cellular signaling cascades to regulate neuronal proliferation, differentiation and survival (PubMed:22649032). The immature NGF precursor (proNGF) functions as a ligand for the heterodimeric receptor formed by SORCS2 and NGFR, and activates cellular signaling cascades that lead to inactivation of RAC1 and/or RAC2, reorganization of the actin cytoskeleton and neuronal growth cone collapse (PubMed:22155786). In contrast to mature NGF, the precursor form (proNGF) promotes neuronal apoptosis (in vitro) (PubMed:20036257). Inhibits metalloproteinase-dependent proteolysis of platelet glycoprotein VI (By similarity). Binds lysophosphatidylinositol and lysophosphatidylserine between the two chains of the homodimer (PubMed:22649032, PubMed:26144237). The lipid-bound form promotes histamine relase from mast cells, contrary to the lipid-free form (PubMed:22649032).</text>
</comment>
<comment type="subunit">
    <text evidence="1 4 5 6 7 9 10 11 13">Homodimer (PubMed:1956407, PubMed:20036257, PubMed:22649032, PubMed:26144237, PubMed:30061605, PubMed:8201620). The homodimer interacts with a single NTRK1 chain (PubMed:22649032). The homodimer interacts with a single NGFR chain (By similarity). The NGF dimer interacts with a single SORCS2 chain (via extracellular domain) (PubMed:30061605). The NGF precursor (proNGF) binds to a receptor complex formed by SORT1 and NGFR, which leads to NGF endocytosis (PubMed:20036257). Both mature NGF and the immature NGF precursor (proNGF) interact with SORCS2 and with the heterodimer formed by SORCS2 and NGFR (via extracellular domains) (PubMed:22155786, PubMed:30061605). The NGF precursor (proNGF) has much higher affinity for SORCS2 than mature NGF (PubMed:24908487). The NGF precursor (proNGF) has much higher affinity for SORT1 than mature NGF (PubMed:20036257). Interacts with ADAM10 in a divalent cation-dependent manner (By similarity). Interacts with SORCS3 (By similarity).</text>
</comment>
<comment type="subcellular location">
    <subcellularLocation>
        <location evidence="3">Secreted</location>
    </subcellularLocation>
    <subcellularLocation>
        <location evidence="5">Endosome lumen</location>
    </subcellularLocation>
    <text evidence="5">ProNGF is endocytosed after binding to the cell surface receptor formed by SORT1 and NGFR.</text>
</comment>
<comment type="tissue specificity">
    <text evidence="3 12">Detected in submaxillary gland (at protein level) (PubMed:1284621). Highly expressed in male submaxillary gland. Levels are much lower in female submaxillary gland (PubMed:1284621, PubMed:6336309).</text>
</comment>
<comment type="induction">
    <text evidence="8">Expression oscillates in a circadian manner in the suprachiasmatic nucleus (SCN) of the brain.</text>
</comment>
<comment type="similarity">
    <text evidence="14">Belongs to the NGF-beta family.</text>
</comment>
<comment type="sequence caution" evidence="14">
    <conflict type="erroneous initiation">
        <sequence resource="EMBL-CDS" id="AAA37687"/>
    </conflict>
    <text>Extended N-terminus.</text>
</comment>
<comment type="sequence caution" evidence="14">
    <conflict type="erroneous initiation">
        <sequence resource="EMBL-CDS" id="AAA39818"/>
    </conflict>
    <text>Extended N-terminus.</text>
</comment>
<comment type="sequence caution" evidence="14">
    <conflict type="erroneous initiation">
        <sequence resource="EMBL-CDS" id="AAA39820"/>
    </conflict>
    <text>Extended N-terminus.</text>
</comment>
<comment type="sequence caution" evidence="14">
    <conflict type="erroneous initiation">
        <sequence resource="EMBL-CDS" id="AAA39821"/>
    </conflict>
    <text>Extended N-terminus.</text>
</comment>
<comment type="sequence caution" evidence="14">
    <conflict type="erroneous initiation">
        <sequence resource="EMBL-CDS" id="CAA24221"/>
    </conflict>
    <text>Extended N-terminus.</text>
</comment>
<accession>P01139</accession>
<accession>Q63864</accession>
<accession>Q6LDB7</accession>
<sequence>MSMLFYTLITAFLIGVQAEPYTDSNVPEGDSVPEAHWTKLQHSLDTALRRARSAPTAPIAARVTGQTRNITVDPRLFKKRRLHSPRVLFSTQPPPTSSDTLDLDFQAHGTIPFNRTHRSKRSSTHPVFHMGEFSVCDSVSVWVGDKTTATDIKGKEVTVLAEVNINNSVFRQYFFETKCRASNPVESGCRGIDSKHWNSYCTTTHTFVKALTTDEKQAAWRFIRIDTACVCVLSRKATRRG</sequence>
<feature type="signal peptide" evidence="5">
    <location>
        <begin position="1"/>
        <end position="18"/>
    </location>
</feature>
<feature type="propeptide" id="PRO_0000019601" evidence="15 16">
    <location>
        <begin position="19"/>
        <end position="121"/>
    </location>
</feature>
<feature type="chain" id="PRO_0000019602" description="Beta-nerve growth factor">
    <location>
        <begin position="122"/>
        <end position="241"/>
    </location>
</feature>
<feature type="binding site" description="in other chain" evidence="10 22">
    <location>
        <position position="171"/>
    </location>
    <ligand>
        <name>a 1-acyl-sn-glycero-3-phospho-(1D-myo-inositol)</name>
        <dbReference type="ChEBI" id="CHEBI:64771"/>
        <note>ligand shared between dimeric partners</note>
    </ligand>
</feature>
<feature type="binding site" description="in other chain" evidence="7 21">
    <location>
        <position position="171"/>
    </location>
    <ligand>
        <name>a 1-acyl-sn-glycero-3-phospho-L-serine</name>
        <dbReference type="ChEBI" id="CHEBI:64379"/>
        <note>ligand shared between dimeric partners</note>
    </ligand>
</feature>
<feature type="binding site" description="in other chain" evidence="10 22">
    <location>
        <position position="173"/>
    </location>
    <ligand>
        <name>a 1-acyl-sn-glycero-3-phospho-(1D-myo-inositol)</name>
        <dbReference type="ChEBI" id="CHEBI:64771"/>
        <note>ligand shared between dimeric partners</note>
    </ligand>
</feature>
<feature type="binding site" evidence="10 22">
    <location>
        <position position="209"/>
    </location>
    <ligand>
        <name>a 1-acyl-sn-glycero-3-phospho-(1D-myo-inositol)</name>
        <dbReference type="ChEBI" id="CHEBI:64771"/>
        <note>ligand shared between dimeric partners</note>
    </ligand>
</feature>
<feature type="binding site" evidence="7 21">
    <location>
        <position position="209"/>
    </location>
    <ligand>
        <name>a 1-acyl-sn-glycero-3-phospho-L-serine</name>
        <dbReference type="ChEBI" id="CHEBI:64379"/>
        <note>ligand shared between dimeric partners</note>
    </ligand>
</feature>
<feature type="glycosylation site" description="N-linked (GlcNAc...) asparagine" evidence="2">
    <location>
        <position position="69"/>
    </location>
</feature>
<feature type="glycosylation site" description="N-linked (GlcNAc...) asparagine" evidence="2">
    <location>
        <position position="114"/>
    </location>
</feature>
<feature type="disulfide bond" evidence="4 7 10 11 13 17 18 19 20 21 22 23 24">
    <location>
        <begin position="136"/>
        <end position="201"/>
    </location>
</feature>
<feature type="disulfide bond" evidence="4 7 10 11 13 17 18 19 20 21 22 23 24">
    <location>
        <begin position="179"/>
        <end position="229"/>
    </location>
</feature>
<feature type="disulfide bond" evidence="4 7 10 11 13 17 18 19 20 21 22 23 24">
    <location>
        <begin position="189"/>
        <end position="231"/>
    </location>
</feature>
<feature type="mutagenesis site" description="Abolishes production of the mature chain and promotes apoptosis of superior cervical ganglion neurons; when associated with 79-A-A-80 and 120-A-A-121." evidence="5">
    <original>RR</original>
    <variation>AA</variation>
    <location>
        <begin position="49"/>
        <end position="50"/>
    </location>
</feature>
<feature type="mutagenesis site" description="Abolishes production of the mature chain and promotes apoptosis of superior cervical ganglion neurons; when associated with 49-A-A-50 and 120-A-A-121." evidence="5">
    <original>KR</original>
    <variation>AA</variation>
    <location>
        <begin position="79"/>
        <end position="80"/>
    </location>
</feature>
<feature type="mutagenesis site" description="Abolishes production of the mature chain and promotes apoptosis of superior cervical ganglion neurons; when associated with 49-A-A-50 and 79-A-A-80." evidence="5">
    <original>KR</original>
    <variation>AA</variation>
    <location>
        <begin position="120"/>
        <end position="121"/>
    </location>
</feature>
<feature type="mutagenesis site" description="Near loss of the ability to trigger histamine release from mast cells. No effect on interaction with NTRK1." evidence="7">
    <original>K</original>
    <variation>L</variation>
    <location>
        <position position="209"/>
    </location>
</feature>
<feature type="sequence conflict" description="In Ref. 5; AAB26820." evidence="14" ref="5">
    <original>LSRKATRRG</original>
    <variation>CSAGRLQEEADLPAAPFPTCPLHTLLGPSLPQPVNYFKL</variation>
    <location>
        <begin position="233"/>
        <end position="241"/>
    </location>
</feature>
<feature type="helix" evidence="27">
    <location>
        <begin position="127"/>
        <end position="130"/>
    </location>
</feature>
<feature type="strand" evidence="26">
    <location>
        <begin position="133"/>
        <end position="136"/>
    </location>
</feature>
<feature type="strand" evidence="25">
    <location>
        <begin position="138"/>
        <end position="144"/>
    </location>
</feature>
<feature type="strand" evidence="25">
    <location>
        <begin position="148"/>
        <end position="151"/>
    </location>
</feature>
<feature type="strand" evidence="25">
    <location>
        <begin position="156"/>
        <end position="159"/>
    </location>
</feature>
<feature type="strand" evidence="25">
    <location>
        <begin position="161"/>
        <end position="165"/>
    </location>
</feature>
<feature type="strand" evidence="25">
    <location>
        <begin position="168"/>
        <end position="171"/>
    </location>
</feature>
<feature type="strand" evidence="25">
    <location>
        <begin position="174"/>
        <end position="180"/>
    </location>
</feature>
<feature type="turn" evidence="25">
    <location>
        <begin position="194"/>
        <end position="196"/>
    </location>
</feature>
<feature type="strand" evidence="25">
    <location>
        <begin position="197"/>
        <end position="213"/>
    </location>
</feature>
<feature type="strand" evidence="25">
    <location>
        <begin position="218"/>
        <end position="235"/>
    </location>
</feature>
<reference key="1">
    <citation type="journal article" date="1983" name="Nature">
        <title>Isolation and nucleotide sequence of a cDNA encoding the precursor of mouse nerve growth factor.</title>
        <authorList>
            <person name="Scott J."/>
            <person name="Selby M.J."/>
            <person name="Urdea M.S."/>
            <person name="Quiroga M."/>
            <person name="Bell G.I."/>
            <person name="Rutter W.J."/>
        </authorList>
    </citation>
    <scope>NUCLEOTIDE SEQUENCE [MRNA]</scope>
    <scope>TISSUE SPECIFICITY</scope>
    <source>
        <tissue>Submandibular gland</tissue>
    </source>
</reference>
<reference key="2">
    <citation type="journal article" date="1983" name="Nature">
        <title>Human beta-nerve growth factor gene sequence highly homologous to that of mouse.</title>
        <authorList>
            <person name="Ullrich A."/>
            <person name="Gray A."/>
            <person name="Berman C."/>
            <person name="Dull T.J."/>
        </authorList>
    </citation>
    <scope>NUCLEOTIDE SEQUENCE [MRNA]</scope>
</reference>
<reference key="3">
    <citation type="journal article" date="1983" name="Cold Spring Harb. Symp. Quant. Biol.">
        <title>Sequence homology of human and mouse beta-NGF subunit genes.</title>
        <authorList>
            <person name="Ullrich A."/>
            <person name="Gray A."/>
            <person name="Berman C."/>
            <person name="Coussens L."/>
            <person name="Dull T.J."/>
        </authorList>
    </citation>
    <scope>NUCLEOTIDE SEQUENCE [MRNA]</scope>
</reference>
<reference key="4">
    <citation type="journal article" date="1987" name="Mol. Cell. Biol.">
        <title>Mouse nerve growth factor gene: structure and expression.</title>
        <authorList>
            <person name="Selby M.J."/>
            <person name="Edwards R."/>
            <person name="Sharp F."/>
            <person name="Rutter W.J."/>
        </authorList>
    </citation>
    <scope>NUCLEOTIDE SEQUENCE [GENOMIC DNA]</scope>
    <source>
        <strain>C57BL/6J</strain>
        <tissue>Submandibular gland</tissue>
    </source>
</reference>
<reference key="5">
    <citation type="journal article" date="1992" name="Neurochem. Int.">
        <title>Production and secretion of nerve growth factor by clonal striated muscle cell line, G8-1.</title>
        <authorList>
            <person name="Yamamoto T."/>
            <person name="Yamakuni T."/>
            <person name="Okabe N."/>
            <person name="Amano T."/>
        </authorList>
    </citation>
    <scope>NUCLEOTIDE SEQUENCE [MRNA]</scope>
    <scope>TISSUE SPECIFICITY</scope>
    <scope>SUBCELLULAR LOCATION</scope>
    <source>
        <tissue>Skeletal muscle</tissue>
    </source>
</reference>
<reference key="6">
    <citation type="journal article" date="1973" name="Biochemistry">
        <title>Amino acid sequences of mouse 2.5S nerve growth factor. II. Isolation and characterization of the thermolytic and peptic peptides and the complete covalent structure.</title>
        <authorList>
            <person name="Angeletti R.H."/>
            <person name="Hermodson M.A."/>
            <person name="Bradshaw R.A."/>
        </authorList>
    </citation>
    <scope>PROTEIN SEQUENCE OF 122-239</scope>
</reference>
<reference key="7">
    <citation type="journal article" date="2011" name="Sci. Signal.">
        <title>Neuronal growth cone retraction relies on proneurotrophin receptor signaling through Rac.</title>
        <authorList>
            <person name="Deinhardt K."/>
            <person name="Kim T."/>
            <person name="Spellman D.S."/>
            <person name="Mains R.E."/>
            <person name="Eipper B.A."/>
            <person name="Neubert T.A."/>
            <person name="Chao M.V."/>
            <person name="Hempstead B.L."/>
        </authorList>
    </citation>
    <scope>FUNCTION</scope>
    <scope>INTERACTION WITH SORCS2 AND NGFR</scope>
</reference>
<reference key="8">
    <citation type="journal article" date="2013" name="J. Neurosci.">
        <title>p75 neurotrophin receptor is a clock gene that regulates oscillatory components of circadian and metabolic networks.</title>
        <authorList>
            <person name="Baeza-Raja B."/>
            <person name="Eckel-Mahan K."/>
            <person name="Zhang L."/>
            <person name="Vagena E."/>
            <person name="Tsigelny I.F."/>
            <person name="Sassone-Corsi P."/>
            <person name="Ptacek L.J."/>
            <person name="Akassoglou K."/>
        </authorList>
    </citation>
    <scope>INDUCTION</scope>
</reference>
<reference key="9">
    <citation type="journal article" date="2014" name="Neuron">
        <title>SorCS2 regulates dopaminergic wiring and is processed into an apoptotic two-chain receptor in peripheral glia.</title>
        <authorList>
            <person name="Glerup S."/>
            <person name="Olsen D."/>
            <person name="Vaegter C.B."/>
            <person name="Gustafsen C."/>
            <person name="Sjoegaard S.S."/>
            <person name="Hermey G."/>
            <person name="Kjolby M."/>
            <person name="Molgaard S."/>
            <person name="Ulrichsen M."/>
            <person name="Boggild S."/>
            <person name="Skeldal S."/>
            <person name="Fjorback A.N."/>
            <person name="Nyengaard J.R."/>
            <person name="Jacobsen J."/>
            <person name="Bender D."/>
            <person name="Bjarkam C.R."/>
            <person name="Soerensen E.S."/>
            <person name="Fuechtbauer E.M."/>
            <person name="Eichele G."/>
            <person name="Madsen P."/>
            <person name="Willnow T.E."/>
            <person name="Petersen C.M."/>
            <person name="Nykjaer A."/>
        </authorList>
    </citation>
    <scope>INTERACTION WITH SORCS2</scope>
</reference>
<reference evidence="17" key="10">
    <citation type="journal article" date="1991" name="Nature">
        <title>New protein fold revealed by a 2.3-A resolution crystal structure of nerve growth factor.</title>
        <authorList>
            <person name="McDonald N.Q."/>
            <person name="Lapatto R."/>
            <person name="Murray-Rust J."/>
            <person name="Gunning J."/>
            <person name="Wlodawer A."/>
            <person name="Blundell T.L."/>
        </authorList>
    </citation>
    <scope>X-RAY CRYSTALLOGRAPHY (2.30 ANGSTROMS) OF 131-237</scope>
    <scope>SUBUNIT</scope>
    <scope>DISULFIDE BONDS</scope>
</reference>
<reference evidence="18" key="11">
    <citation type="journal article" date="1994" name="J. Mol. Biol.">
        <title>Nerve growth factor in different crystal forms displays structural flexibility and reveals zinc binding sites.</title>
        <authorList>
            <person name="Holland D.R."/>
            <person name="Cousens L.S."/>
            <person name="Meng W."/>
            <person name="Matthews B.W."/>
        </authorList>
    </citation>
    <scope>X-RAY CRYSTALLOGRAPHY (2.50 ANGSTROMS) OF 130-239</scope>
    <scope>SUBUNIT</scope>
    <scope>DISULFIDE BONDS</scope>
</reference>
<reference evidence="19" key="12">
    <citation type="journal article" date="1997" name="Structure">
        <title>Structure of mouse 7S NGF: a complex of nerve growth factor with four binding proteins.</title>
        <authorList>
            <person name="Bax B."/>
            <person name="Blundell T.L."/>
            <person name="Murray-Rust J."/>
            <person name="McDonald N.Q."/>
        </authorList>
    </citation>
    <scope>X-RAY CRYSTALLOGRAPHY (3.15 ANGSTROMS) OF 122-239 OF 7S COMPLEX</scope>
    <source>
        <strain>Swiss Webster</strain>
        <tissue>Submandibular gland</tissue>
    </source>
</reference>
<reference evidence="20" key="13">
    <citation type="journal article" date="2010" name="J. Mol. Biol.">
        <title>Molecular and structural insight into proNGF engagement of p75NTR and sortilin.</title>
        <authorList>
            <person name="Feng D."/>
            <person name="Kim T."/>
            <person name="Ozkan E."/>
            <person name="Light M."/>
            <person name="Torkin R."/>
            <person name="Teng K.K."/>
            <person name="Hempstead B.L."/>
            <person name="Garcia K.C."/>
        </authorList>
    </citation>
    <scope>X-RAY CRYSTALLOGRAPHY (3.75 ANGSTROMS) OF 19-241 IN COMPLEX WITH NGFR</scope>
    <scope>FUNCTION</scope>
    <scope>SUBUNIT</scope>
    <scope>INTERACTION WITH SORT1 AND NGFR</scope>
    <scope>SUBCELLULAR LOCATION</scope>
    <scope>PARTIAL PROTEIN SEQUENCE</scope>
    <scope>MUTAGENESIS OF 49-ARG-ARG-50; 79-ARG-LYS-80 AND 120-ARG-LYS-121</scope>
    <scope>DISULFIDE BONDS</scope>
</reference>
<reference evidence="21" key="14">
    <citation type="journal article" date="2012" name="FASEB J.">
        <title>Structural and functional insights into lipid-bound nerve growth factors.</title>
        <authorList>
            <person name="Tong Q."/>
            <person name="Wang F."/>
            <person name="Zhou H.Z."/>
            <person name="Sun H.L."/>
            <person name="Song H."/>
            <person name="Shu Y.Y."/>
            <person name="Gong Y."/>
            <person name="Zhang W.T."/>
            <person name="Cai T.X."/>
            <person name="Yang F.Q."/>
            <person name="Tang J."/>
            <person name="Jiang T."/>
        </authorList>
    </citation>
    <scope>X-RAY CRYSTALLOGRAPHY (2.30 ANGSTROMS) OF 122-241 IN COMPLEX WITH LYSOPHOSPHATIDYLSERINE</scope>
    <scope>FUNCTION</scope>
    <scope>INTERACTION WITH NTRK1</scope>
    <scope>SUBUNIT</scope>
    <scope>LIPID-BINDING</scope>
    <scope>DISULFIDE BONDS</scope>
    <scope>MUTAGENESIS OF LYS-209</scope>
</reference>
<reference evidence="22" key="15">
    <citation type="journal article" date="2015" name="Acta Crystallogr. F">
        <title>The structure of nerve growth factor in complex with lysophosphatidylinositol.</title>
        <authorList>
            <person name="Sun H.L."/>
            <person name="Jiang T."/>
        </authorList>
    </citation>
    <scope>X-RAY CRYSTALLOGRAPHY (2.60 ANGSTROMS) OF 122-241 IN COMPLEX WITH LYSOPHOSPHATIDYLINOSITOL</scope>
    <scope>FUNCTION</scope>
    <scope>SUBUNIT</scope>
    <scope>LIPID-BINDING</scope>
    <scope>DISULFIDE BONDS</scope>
</reference>
<reference evidence="24" key="16">
    <citation type="journal article" date="2018" name="Nat. Commun.">
        <title>Structural insights into SorCS2-Nerve Growth Factor complex formation.</title>
        <authorList>
            <person name="Leloup N."/>
            <person name="Chataigner L.M.P."/>
            <person name="Janssen B.J.C."/>
        </authorList>
    </citation>
    <scope>X-RAY CRYSTALLOGRAPHY (3.90 ANGSTROMS) OF 122-238 IN COMPLEX WITH SORCS2</scope>
    <scope>SUBUNIT</scope>
    <scope>DISULFIDE BONDS</scope>
</reference>
<dbReference type="EMBL" id="M35075">
    <property type="protein sequence ID" value="AAA39818.1"/>
    <property type="status" value="ALT_INIT"/>
    <property type="molecule type" value="mRNA"/>
</dbReference>
<dbReference type="EMBL" id="V00836">
    <property type="protein sequence ID" value="CAA24221.1"/>
    <property type="status" value="ALT_INIT"/>
    <property type="molecule type" value="mRNA"/>
</dbReference>
<dbReference type="EMBL" id="K01759">
    <property type="protein sequence ID" value="AAA39820.1"/>
    <property type="status" value="ALT_INIT"/>
    <property type="molecule type" value="mRNA"/>
</dbReference>
<dbReference type="EMBL" id="M14805">
    <property type="protein sequence ID" value="AAA39821.1"/>
    <property type="status" value="ALT_INIT"/>
    <property type="molecule type" value="mRNA"/>
</dbReference>
<dbReference type="EMBL" id="M17298">
    <property type="protein sequence ID" value="AAA37687.1"/>
    <property type="status" value="ALT_INIT"/>
    <property type="molecule type" value="Genomic_DNA"/>
</dbReference>
<dbReference type="EMBL" id="M17296">
    <property type="protein sequence ID" value="AAA37687.1"/>
    <property type="status" value="JOINED"/>
    <property type="molecule type" value="Genomic_DNA"/>
</dbReference>
<dbReference type="EMBL" id="M17297">
    <property type="protein sequence ID" value="AAA37687.1"/>
    <property type="status" value="JOINED"/>
    <property type="molecule type" value="Genomic_DNA"/>
</dbReference>
<dbReference type="EMBL" id="S62089">
    <property type="protein sequence ID" value="AAB26820.2"/>
    <property type="molecule type" value="mRNA"/>
</dbReference>
<dbReference type="CCDS" id="CCDS51025.1"/>
<dbReference type="RefSeq" id="NP_001106168.1">
    <property type="nucleotide sequence ID" value="NM_001112698.2"/>
</dbReference>
<dbReference type="RefSeq" id="NP_038637.1">
    <property type="nucleotide sequence ID" value="NM_013609.3"/>
</dbReference>
<dbReference type="RefSeq" id="XP_006501171.1">
    <property type="nucleotide sequence ID" value="XM_006501108.3"/>
</dbReference>
<dbReference type="PDB" id="1BET">
    <property type="method" value="X-ray"/>
    <property type="resolution" value="2.30 A"/>
    <property type="chains" value="A=131-237"/>
</dbReference>
<dbReference type="PDB" id="1BTG">
    <property type="method" value="X-ray"/>
    <property type="resolution" value="2.50 A"/>
    <property type="chains" value="A/B/C=130-239"/>
</dbReference>
<dbReference type="PDB" id="1SGF">
    <property type="method" value="X-ray"/>
    <property type="resolution" value="3.15 A"/>
    <property type="chains" value="B/Y=122-239"/>
</dbReference>
<dbReference type="PDB" id="3IJ2">
    <property type="method" value="X-ray"/>
    <property type="resolution" value="3.75 A"/>
    <property type="chains" value="A/B=19-241"/>
</dbReference>
<dbReference type="PDB" id="4EAX">
    <property type="method" value="X-ray"/>
    <property type="resolution" value="2.30 A"/>
    <property type="chains" value="A/B/C/D=122-241"/>
</dbReference>
<dbReference type="PDB" id="4XPJ">
    <property type="method" value="X-ray"/>
    <property type="resolution" value="2.60 A"/>
    <property type="chains" value="A/B=122-241"/>
</dbReference>
<dbReference type="PDB" id="5LSD">
    <property type="method" value="NMR"/>
    <property type="chains" value="A/B=122-239"/>
</dbReference>
<dbReference type="PDB" id="6FFY">
    <property type="method" value="X-ray"/>
    <property type="resolution" value="3.90 A"/>
    <property type="chains" value="B/C=122-238"/>
</dbReference>
<dbReference type="PDBsum" id="1BET"/>
<dbReference type="PDBsum" id="1BTG"/>
<dbReference type="PDBsum" id="1SGF"/>
<dbReference type="PDBsum" id="3IJ2"/>
<dbReference type="PDBsum" id="4EAX"/>
<dbReference type="PDBsum" id="4XPJ"/>
<dbReference type="PDBsum" id="5LSD"/>
<dbReference type="PDBsum" id="6FFY"/>
<dbReference type="SMR" id="P01139"/>
<dbReference type="BioGRID" id="201764">
    <property type="interactions" value="6"/>
</dbReference>
<dbReference type="DIP" id="DIP-59840N"/>
<dbReference type="FunCoup" id="P01139">
    <property type="interactions" value="1147"/>
</dbReference>
<dbReference type="IntAct" id="P01139">
    <property type="interactions" value="4"/>
</dbReference>
<dbReference type="STRING" id="10090.ENSMUSP00000102538"/>
<dbReference type="GlyCosmos" id="P01139">
    <property type="glycosylation" value="2 sites, No reported glycans"/>
</dbReference>
<dbReference type="GlyGen" id="P01139">
    <property type="glycosylation" value="3 sites"/>
</dbReference>
<dbReference type="PhosphoSitePlus" id="P01139"/>
<dbReference type="PaxDb" id="10090-ENSMUSP00000102538"/>
<dbReference type="PeptideAtlas" id="P01139"/>
<dbReference type="ProteomicsDB" id="252833"/>
<dbReference type="ABCD" id="P01139">
    <property type="antibodies" value="53 sequenced antibodies"/>
</dbReference>
<dbReference type="Antibodypedia" id="20173">
    <property type="antibodies" value="1307 antibodies from 45 providers"/>
</dbReference>
<dbReference type="DNASU" id="18049"/>
<dbReference type="Ensembl" id="ENSMUST00000035952.5">
    <property type="protein sequence ID" value="ENSMUSP00000040345.4"/>
    <property type="gene ID" value="ENSMUSG00000027859.11"/>
</dbReference>
<dbReference type="GeneID" id="18049"/>
<dbReference type="KEGG" id="mmu:18049"/>
<dbReference type="UCSC" id="uc012cuz.2">
    <property type="organism name" value="mouse"/>
</dbReference>
<dbReference type="AGR" id="MGI:97321"/>
<dbReference type="CTD" id="4803"/>
<dbReference type="MGI" id="MGI:97321">
    <property type="gene designation" value="Ngf"/>
</dbReference>
<dbReference type="VEuPathDB" id="HostDB:ENSMUSG00000027859"/>
<dbReference type="eggNOG" id="ENOG502RYPU">
    <property type="taxonomic scope" value="Eukaryota"/>
</dbReference>
<dbReference type="GeneTree" id="ENSGT00390000007725"/>
<dbReference type="HOGENOM" id="CLU_059942_1_1_1"/>
<dbReference type="InParanoid" id="P01139"/>
<dbReference type="OrthoDB" id="6491780at2759"/>
<dbReference type="PhylomeDB" id="P01139"/>
<dbReference type="Reactome" id="R-MMU-167060">
    <property type="pathway name" value="NGF processing"/>
</dbReference>
<dbReference type="Reactome" id="R-MMU-170968">
    <property type="pathway name" value="Frs2-mediated activation"/>
</dbReference>
<dbReference type="Reactome" id="R-MMU-170984">
    <property type="pathway name" value="ARMS-mediated activation"/>
</dbReference>
<dbReference type="Reactome" id="R-MMU-177504">
    <property type="pathway name" value="Retrograde neurotrophin signalling"/>
</dbReference>
<dbReference type="Reactome" id="R-MMU-187042">
    <property type="pathway name" value="TRKA activation by NGF"/>
</dbReference>
<dbReference type="Reactome" id="R-MMU-198203">
    <property type="pathway name" value="PI3K/AKT activation"/>
</dbReference>
<dbReference type="Reactome" id="R-MMU-205017">
    <property type="pathway name" value="NFG and proNGF binds to p75NTR"/>
</dbReference>
<dbReference type="Reactome" id="R-MMU-205025">
    <property type="pathway name" value="NADE modulates death signalling"/>
</dbReference>
<dbReference type="Reactome" id="R-MMU-205043">
    <property type="pathway name" value="NRIF signals cell death from the nucleus"/>
</dbReference>
<dbReference type="Reactome" id="R-MMU-209543">
    <property type="pathway name" value="p75NTR recruits signalling complexes"/>
</dbReference>
<dbReference type="Reactome" id="R-MMU-209560">
    <property type="pathway name" value="NF-kB is activated and signals survival"/>
</dbReference>
<dbReference type="Reactome" id="R-MMU-209563">
    <property type="pathway name" value="Axonal growth stimulation"/>
</dbReference>
<dbReference type="BioGRID-ORCS" id="18049">
    <property type="hits" value="0 hits in 80 CRISPR screens"/>
</dbReference>
<dbReference type="EvolutionaryTrace" id="P01139"/>
<dbReference type="PRO" id="PR:P01139"/>
<dbReference type="Proteomes" id="UP000000589">
    <property type="component" value="Chromosome 3"/>
</dbReference>
<dbReference type="RNAct" id="P01139">
    <property type="molecule type" value="protein"/>
</dbReference>
<dbReference type="Bgee" id="ENSMUSG00000027859">
    <property type="expression patterns" value="Expressed in submandibular gland and 70 other cell types or tissues"/>
</dbReference>
<dbReference type="ExpressionAtlas" id="P01139">
    <property type="expression patterns" value="baseline and differential"/>
</dbReference>
<dbReference type="GO" id="GO:0005788">
    <property type="term" value="C:endoplasmic reticulum lumen"/>
    <property type="evidence" value="ECO:0000304"/>
    <property type="project" value="Reactome"/>
</dbReference>
<dbReference type="GO" id="GO:0031904">
    <property type="term" value="C:endosome lumen"/>
    <property type="evidence" value="ECO:0007669"/>
    <property type="project" value="UniProtKB-SubCell"/>
</dbReference>
<dbReference type="GO" id="GO:0005576">
    <property type="term" value="C:extracellular region"/>
    <property type="evidence" value="ECO:0000304"/>
    <property type="project" value="Reactome"/>
</dbReference>
<dbReference type="GO" id="GO:0005615">
    <property type="term" value="C:extracellular space"/>
    <property type="evidence" value="ECO:0007005"/>
    <property type="project" value="BHF-UCL"/>
</dbReference>
<dbReference type="GO" id="GO:0008083">
    <property type="term" value="F:growth factor activity"/>
    <property type="evidence" value="ECO:0007669"/>
    <property type="project" value="UniProtKB-KW"/>
</dbReference>
<dbReference type="GO" id="GO:0008289">
    <property type="term" value="F:lipid binding"/>
    <property type="evidence" value="ECO:0007669"/>
    <property type="project" value="UniProtKB-KW"/>
</dbReference>
<dbReference type="GO" id="GO:0008191">
    <property type="term" value="F:metalloendopeptidase inhibitor activity"/>
    <property type="evidence" value="ECO:0000250"/>
    <property type="project" value="UniProtKB"/>
</dbReference>
<dbReference type="GO" id="GO:0005163">
    <property type="term" value="F:nerve growth factor receptor binding"/>
    <property type="evidence" value="ECO:0007669"/>
    <property type="project" value="Ensembl"/>
</dbReference>
<dbReference type="GO" id="GO:0030297">
    <property type="term" value="F:transmembrane receptor protein tyrosine kinase activator activity"/>
    <property type="evidence" value="ECO:0000314"/>
    <property type="project" value="BHF-UCL"/>
</dbReference>
<dbReference type="GO" id="GO:0048675">
    <property type="term" value="P:axon extension"/>
    <property type="evidence" value="ECO:0000315"/>
    <property type="project" value="MGI"/>
</dbReference>
<dbReference type="GO" id="GO:0007623">
    <property type="term" value="P:circadian rhythm"/>
    <property type="evidence" value="ECO:0000270"/>
    <property type="project" value="UniProtKB"/>
</dbReference>
<dbReference type="GO" id="GO:0097192">
    <property type="term" value="P:extrinsic apoptotic signaling pathway in absence of ligand"/>
    <property type="evidence" value="ECO:0000314"/>
    <property type="project" value="MGI"/>
</dbReference>
<dbReference type="GO" id="GO:0008625">
    <property type="term" value="P:extrinsic apoptotic signaling pathway via death domain receptors"/>
    <property type="evidence" value="ECO:0007669"/>
    <property type="project" value="Ensembl"/>
</dbReference>
<dbReference type="GO" id="GO:0043524">
    <property type="term" value="P:negative regulation of neuron apoptotic process"/>
    <property type="evidence" value="ECO:0000316"/>
    <property type="project" value="MGI"/>
</dbReference>
<dbReference type="GO" id="GO:0038180">
    <property type="term" value="P:nerve growth factor signaling pathway"/>
    <property type="evidence" value="ECO:0000314"/>
    <property type="project" value="MGI"/>
</dbReference>
<dbReference type="GO" id="GO:0051402">
    <property type="term" value="P:neuron apoptotic process"/>
    <property type="evidence" value="ECO:0000315"/>
    <property type="project" value="MGI"/>
</dbReference>
<dbReference type="GO" id="GO:0031175">
    <property type="term" value="P:neuron projection development"/>
    <property type="evidence" value="ECO:0000314"/>
    <property type="project" value="MGI"/>
</dbReference>
<dbReference type="GO" id="GO:0048812">
    <property type="term" value="P:neuron projection morphogenesis"/>
    <property type="evidence" value="ECO:0000266"/>
    <property type="project" value="MGI"/>
</dbReference>
<dbReference type="GO" id="GO:0048011">
    <property type="term" value="P:neurotrophin TRK receptor signaling pathway"/>
    <property type="evidence" value="ECO:0000314"/>
    <property type="project" value="BHF-UCL"/>
</dbReference>
<dbReference type="GO" id="GO:0007422">
    <property type="term" value="P:peripheral nervous system development"/>
    <property type="evidence" value="ECO:0000315"/>
    <property type="project" value="MGI"/>
</dbReference>
<dbReference type="GO" id="GO:0045773">
    <property type="term" value="P:positive regulation of axon extension"/>
    <property type="evidence" value="ECO:0000314"/>
    <property type="project" value="MGI"/>
</dbReference>
<dbReference type="GO" id="GO:0048672">
    <property type="term" value="P:positive regulation of collateral sprouting"/>
    <property type="evidence" value="ECO:0000314"/>
    <property type="project" value="MGI"/>
</dbReference>
<dbReference type="GO" id="GO:0070374">
    <property type="term" value="P:positive regulation of ERK1 and ERK2 cascade"/>
    <property type="evidence" value="ECO:0000314"/>
    <property type="project" value="BHF-UCL"/>
</dbReference>
<dbReference type="GO" id="GO:0010628">
    <property type="term" value="P:positive regulation of gene expression"/>
    <property type="evidence" value="ECO:0000316"/>
    <property type="project" value="ARUK-UCL"/>
</dbReference>
<dbReference type="GO" id="GO:0014042">
    <property type="term" value="P:positive regulation of neuron maturation"/>
    <property type="evidence" value="ECO:0000314"/>
    <property type="project" value="MGI"/>
</dbReference>
<dbReference type="GO" id="GO:0010976">
    <property type="term" value="P:positive regulation of neuron projection development"/>
    <property type="evidence" value="ECO:0000314"/>
    <property type="project" value="MGI"/>
</dbReference>
<dbReference type="GO" id="GO:0051388">
    <property type="term" value="P:positive regulation of neurotrophin TRK receptor signaling pathway"/>
    <property type="evidence" value="ECO:0000266"/>
    <property type="project" value="MGI"/>
</dbReference>
<dbReference type="GO" id="GO:0051897">
    <property type="term" value="P:positive regulation of phosphatidylinositol 3-kinase/protein kinase B signal transduction"/>
    <property type="evidence" value="ECO:0000314"/>
    <property type="project" value="BHF-UCL"/>
</dbReference>
<dbReference type="GO" id="GO:0031398">
    <property type="term" value="P:positive regulation of protein ubiquitination"/>
    <property type="evidence" value="ECO:0000314"/>
    <property type="project" value="MGI"/>
</dbReference>
<dbReference type="GO" id="GO:0046579">
    <property type="term" value="P:positive regulation of Ras protein signal transduction"/>
    <property type="evidence" value="ECO:0000314"/>
    <property type="project" value="ParkinsonsUK-UCL"/>
</dbReference>
<dbReference type="GO" id="GO:0045664">
    <property type="term" value="P:regulation of neuron differentiation"/>
    <property type="evidence" value="ECO:0000314"/>
    <property type="project" value="MGI"/>
</dbReference>
<dbReference type="GO" id="GO:0046928">
    <property type="term" value="P:regulation of neurotransmitter secretion"/>
    <property type="evidence" value="ECO:0000316"/>
    <property type="project" value="MGI"/>
</dbReference>
<dbReference type="GO" id="GO:0051279">
    <property type="term" value="P:regulation of release of sequestered calcium ion into cytosol"/>
    <property type="evidence" value="ECO:0000316"/>
    <property type="project" value="MGI"/>
</dbReference>
<dbReference type="GO" id="GO:0019233">
    <property type="term" value="P:sensory perception of pain"/>
    <property type="evidence" value="ECO:0000315"/>
    <property type="project" value="MGI"/>
</dbReference>
<dbReference type="DisProt" id="DP00836"/>
<dbReference type="FunFam" id="2.10.90.10:FF:000002">
    <property type="entry name" value="Brain-derived neurotrophic factor"/>
    <property type="match status" value="1"/>
</dbReference>
<dbReference type="Gene3D" id="2.10.90.10">
    <property type="entry name" value="Cystine-knot cytokines"/>
    <property type="match status" value="1"/>
</dbReference>
<dbReference type="InterPro" id="IPR029034">
    <property type="entry name" value="Cystine-knot_cytokine"/>
</dbReference>
<dbReference type="InterPro" id="IPR020408">
    <property type="entry name" value="Nerve_growth_factor-like"/>
</dbReference>
<dbReference type="InterPro" id="IPR002072">
    <property type="entry name" value="Nerve_growth_factor-rel"/>
</dbReference>
<dbReference type="InterPro" id="IPR020425">
    <property type="entry name" value="Nerve_growth_factor_bsu"/>
</dbReference>
<dbReference type="InterPro" id="IPR020437">
    <property type="entry name" value="Nerve_growth_factor_bsu_mml"/>
</dbReference>
<dbReference type="InterPro" id="IPR019846">
    <property type="entry name" value="Nerve_growth_factor_CS"/>
</dbReference>
<dbReference type="PANTHER" id="PTHR11589:SF10">
    <property type="entry name" value="BETA-NERVE GROWTH FACTOR"/>
    <property type="match status" value="1"/>
</dbReference>
<dbReference type="PANTHER" id="PTHR11589">
    <property type="entry name" value="NERVE GROWTH FACTOR NGF -RELATED"/>
    <property type="match status" value="1"/>
</dbReference>
<dbReference type="Pfam" id="PF00243">
    <property type="entry name" value="NGF"/>
    <property type="match status" value="1"/>
</dbReference>
<dbReference type="PIRSF" id="PIRSF001789">
    <property type="entry name" value="NGF"/>
    <property type="match status" value="1"/>
</dbReference>
<dbReference type="PRINTS" id="PR01925">
    <property type="entry name" value="MAMLNGFBETA"/>
</dbReference>
<dbReference type="PRINTS" id="PR00268">
    <property type="entry name" value="NGF"/>
</dbReference>
<dbReference type="PRINTS" id="PR01913">
    <property type="entry name" value="NGFBETA"/>
</dbReference>
<dbReference type="SMART" id="SM00140">
    <property type="entry name" value="NGF"/>
    <property type="match status" value="1"/>
</dbReference>
<dbReference type="SUPFAM" id="SSF57501">
    <property type="entry name" value="Cystine-knot cytokines"/>
    <property type="match status" value="1"/>
</dbReference>
<dbReference type="PROSITE" id="PS00248">
    <property type="entry name" value="NGF_1"/>
    <property type="match status" value="1"/>
</dbReference>
<dbReference type="PROSITE" id="PS50270">
    <property type="entry name" value="NGF_2"/>
    <property type="match status" value="1"/>
</dbReference>